<name>BETB_PSEPK</name>
<dbReference type="EC" id="1.2.1.8" evidence="1"/>
<dbReference type="EMBL" id="AE015451">
    <property type="protein sequence ID" value="AAN70628.1"/>
    <property type="molecule type" value="Genomic_DNA"/>
</dbReference>
<dbReference type="RefSeq" id="NP_747164.1">
    <property type="nucleotide sequence ID" value="NC_002947.4"/>
</dbReference>
<dbReference type="RefSeq" id="WP_003249182.1">
    <property type="nucleotide sequence ID" value="NZ_CP169744.1"/>
</dbReference>
<dbReference type="SMR" id="Q88CW7"/>
<dbReference type="STRING" id="160488.PP_5063"/>
<dbReference type="PaxDb" id="160488-PP_5063"/>
<dbReference type="GeneID" id="83682797"/>
<dbReference type="KEGG" id="ppu:PP_5063"/>
<dbReference type="PATRIC" id="fig|160488.4.peg.5405"/>
<dbReference type="eggNOG" id="COG1012">
    <property type="taxonomic scope" value="Bacteria"/>
</dbReference>
<dbReference type="HOGENOM" id="CLU_005391_0_0_6"/>
<dbReference type="OrthoDB" id="9812625at2"/>
<dbReference type="PhylomeDB" id="Q88CW7"/>
<dbReference type="BioCyc" id="PPUT160488:G1G01-5407-MONOMER"/>
<dbReference type="UniPathway" id="UPA00529">
    <property type="reaction ID" value="UER00386"/>
</dbReference>
<dbReference type="Proteomes" id="UP000000556">
    <property type="component" value="Chromosome"/>
</dbReference>
<dbReference type="GO" id="GO:0008802">
    <property type="term" value="F:betaine-aldehyde dehydrogenase (NAD+) activity"/>
    <property type="evidence" value="ECO:0007669"/>
    <property type="project" value="UniProtKB-UniRule"/>
</dbReference>
<dbReference type="GO" id="GO:0046872">
    <property type="term" value="F:metal ion binding"/>
    <property type="evidence" value="ECO:0007669"/>
    <property type="project" value="UniProtKB-KW"/>
</dbReference>
<dbReference type="GO" id="GO:0019285">
    <property type="term" value="P:glycine betaine biosynthetic process from choline"/>
    <property type="evidence" value="ECO:0007669"/>
    <property type="project" value="UniProtKB-UniRule"/>
</dbReference>
<dbReference type="CDD" id="cd07090">
    <property type="entry name" value="ALDH_F9_TMBADH"/>
    <property type="match status" value="1"/>
</dbReference>
<dbReference type="FunFam" id="3.40.309.10:FF:000014">
    <property type="entry name" value="NAD/NADP-dependent betaine aldehyde dehydrogenase"/>
    <property type="match status" value="1"/>
</dbReference>
<dbReference type="FunFam" id="3.40.605.10:FF:000007">
    <property type="entry name" value="NAD/NADP-dependent betaine aldehyde dehydrogenase"/>
    <property type="match status" value="1"/>
</dbReference>
<dbReference type="Gene3D" id="3.40.605.10">
    <property type="entry name" value="Aldehyde Dehydrogenase, Chain A, domain 1"/>
    <property type="match status" value="1"/>
</dbReference>
<dbReference type="Gene3D" id="3.40.309.10">
    <property type="entry name" value="Aldehyde Dehydrogenase, Chain A, domain 2"/>
    <property type="match status" value="1"/>
</dbReference>
<dbReference type="HAMAP" id="MF_00804">
    <property type="entry name" value="BADH"/>
    <property type="match status" value="1"/>
</dbReference>
<dbReference type="InterPro" id="IPR016161">
    <property type="entry name" value="Ald_DH/histidinol_DH"/>
</dbReference>
<dbReference type="InterPro" id="IPR016163">
    <property type="entry name" value="Ald_DH_C"/>
</dbReference>
<dbReference type="InterPro" id="IPR016160">
    <property type="entry name" value="Ald_DH_CS_CYS"/>
</dbReference>
<dbReference type="InterPro" id="IPR029510">
    <property type="entry name" value="Ald_DH_CS_GLU"/>
</dbReference>
<dbReference type="InterPro" id="IPR016162">
    <property type="entry name" value="Ald_DH_N"/>
</dbReference>
<dbReference type="InterPro" id="IPR015590">
    <property type="entry name" value="Aldehyde_DH_dom"/>
</dbReference>
<dbReference type="InterPro" id="IPR011264">
    <property type="entry name" value="BADH"/>
</dbReference>
<dbReference type="NCBIfam" id="TIGR01804">
    <property type="entry name" value="BADH"/>
    <property type="match status" value="1"/>
</dbReference>
<dbReference type="NCBIfam" id="NF009725">
    <property type="entry name" value="PRK13252.1"/>
    <property type="match status" value="1"/>
</dbReference>
<dbReference type="PANTHER" id="PTHR11699">
    <property type="entry name" value="ALDEHYDE DEHYDROGENASE-RELATED"/>
    <property type="match status" value="1"/>
</dbReference>
<dbReference type="Pfam" id="PF00171">
    <property type="entry name" value="Aldedh"/>
    <property type="match status" value="1"/>
</dbReference>
<dbReference type="SUPFAM" id="SSF53720">
    <property type="entry name" value="ALDH-like"/>
    <property type="match status" value="1"/>
</dbReference>
<dbReference type="PROSITE" id="PS00070">
    <property type="entry name" value="ALDEHYDE_DEHYDR_CYS"/>
    <property type="match status" value="1"/>
</dbReference>
<dbReference type="PROSITE" id="PS00687">
    <property type="entry name" value="ALDEHYDE_DEHYDR_GLU"/>
    <property type="match status" value="1"/>
</dbReference>
<protein>
    <recommendedName>
        <fullName evidence="1">Betaine aldehyde dehydrogenase</fullName>
        <shortName evidence="1">BADH</shortName>
        <ecNumber evidence="1">1.2.1.8</ecNumber>
    </recommendedName>
</protein>
<reference key="1">
    <citation type="journal article" date="2002" name="Environ. Microbiol.">
        <title>Complete genome sequence and comparative analysis of the metabolically versatile Pseudomonas putida KT2440.</title>
        <authorList>
            <person name="Nelson K.E."/>
            <person name="Weinel C."/>
            <person name="Paulsen I.T."/>
            <person name="Dodson R.J."/>
            <person name="Hilbert H."/>
            <person name="Martins dos Santos V.A.P."/>
            <person name="Fouts D.E."/>
            <person name="Gill S.R."/>
            <person name="Pop M."/>
            <person name="Holmes M."/>
            <person name="Brinkac L.M."/>
            <person name="Beanan M.J."/>
            <person name="DeBoy R.T."/>
            <person name="Daugherty S.C."/>
            <person name="Kolonay J.F."/>
            <person name="Madupu R."/>
            <person name="Nelson W.C."/>
            <person name="White O."/>
            <person name="Peterson J.D."/>
            <person name="Khouri H.M."/>
            <person name="Hance I."/>
            <person name="Chris Lee P."/>
            <person name="Holtzapple E.K."/>
            <person name="Scanlan D."/>
            <person name="Tran K."/>
            <person name="Moazzez A."/>
            <person name="Utterback T.R."/>
            <person name="Rizzo M."/>
            <person name="Lee K."/>
            <person name="Kosack D."/>
            <person name="Moestl D."/>
            <person name="Wedler H."/>
            <person name="Lauber J."/>
            <person name="Stjepandic D."/>
            <person name="Hoheisel J."/>
            <person name="Straetz M."/>
            <person name="Heim S."/>
            <person name="Kiewitz C."/>
            <person name="Eisen J.A."/>
            <person name="Timmis K.N."/>
            <person name="Duesterhoeft A."/>
            <person name="Tuemmler B."/>
            <person name="Fraser C.M."/>
        </authorList>
    </citation>
    <scope>NUCLEOTIDE SEQUENCE [LARGE SCALE GENOMIC DNA]</scope>
    <source>
        <strain>ATCC 47054 / DSM 6125 / CFBP 8728 / NCIMB 11950 / KT2440</strain>
    </source>
</reference>
<evidence type="ECO:0000255" key="1">
    <source>
        <dbReference type="HAMAP-Rule" id="MF_00804"/>
    </source>
</evidence>
<proteinExistence type="inferred from homology"/>
<comment type="function">
    <text evidence="1">Involved in the biosynthesis of the osmoprotectant glycine betaine. Catalyzes the irreversible oxidation of betaine aldehyde to the corresponding acid.</text>
</comment>
<comment type="catalytic activity">
    <reaction evidence="1">
        <text>betaine aldehyde + NAD(+) + H2O = glycine betaine + NADH + 2 H(+)</text>
        <dbReference type="Rhea" id="RHEA:15305"/>
        <dbReference type="ChEBI" id="CHEBI:15377"/>
        <dbReference type="ChEBI" id="CHEBI:15378"/>
        <dbReference type="ChEBI" id="CHEBI:15710"/>
        <dbReference type="ChEBI" id="CHEBI:17750"/>
        <dbReference type="ChEBI" id="CHEBI:57540"/>
        <dbReference type="ChEBI" id="CHEBI:57945"/>
        <dbReference type="EC" id="1.2.1.8"/>
    </reaction>
    <physiologicalReaction direction="left-to-right" evidence="1">
        <dbReference type="Rhea" id="RHEA:15306"/>
    </physiologicalReaction>
</comment>
<comment type="cofactor">
    <cofactor evidence="1">
        <name>K(+)</name>
        <dbReference type="ChEBI" id="CHEBI:29103"/>
    </cofactor>
    <text evidence="1">Binds 2 potassium ions per subunit.</text>
</comment>
<comment type="pathway">
    <text evidence="1">Amine and polyamine biosynthesis; betaine biosynthesis via choline pathway; betaine from betaine aldehyde: step 1/1.</text>
</comment>
<comment type="subunit">
    <text evidence="1">Dimer of dimers.</text>
</comment>
<comment type="similarity">
    <text evidence="1">Belongs to the aldehyde dehydrogenase family.</text>
</comment>
<keyword id="KW-0479">Metal-binding</keyword>
<keyword id="KW-0520">NAD</keyword>
<keyword id="KW-0521">NADP</keyword>
<keyword id="KW-0558">Oxidation</keyword>
<keyword id="KW-0560">Oxidoreductase</keyword>
<keyword id="KW-0630">Potassium</keyword>
<keyword id="KW-1185">Reference proteome</keyword>
<sequence>MARFGTQKLYIDGAYVDAGSDATFEAINPATGEVLAHVQRATEADVEKAVESAERGQKVWAAMTAMQRSRILRRAVDILRERNDELAMLETLDTGKSYSETRYVDIVTGADVLEYYAGLVPAIEGEQIPLRESSFVYTRREPLGVTVGIGAWNYPIQIALWKSAPALAAGNAMIFKPSEVTSLTTLKLAEIYTEAGLPNGVFNVLTGSGREVGTWLTEHPRIEKVSFTGGTTTGKKVMASASSSSLKEVTMELGGKSPLIICADADLDKAADIAMMANFYSSGQVCTNGTRVFIPAEMKAAFEAKIAERVARIRVGNPEDENTNFGPLVSFQHMESVLGYIAKGKEEGARVLCGGERLTAGDFAKGAFVAPTVFTDCTDDMTIVKEEIFGPVMSILTYETEEEVIRRANDTDYGLAAGVCTNDITRAHRIIHKLEAGICWINAWGESPAEMPVGGYKQSGVGRENGVSSLAQYTRIKSVQVELGGYNSVF</sequence>
<gene>
    <name evidence="1" type="primary">betB</name>
    <name type="ordered locus">PP_5063</name>
</gene>
<accession>Q88CW7</accession>
<organism>
    <name type="scientific">Pseudomonas putida (strain ATCC 47054 / DSM 6125 / CFBP 8728 / NCIMB 11950 / KT2440)</name>
    <dbReference type="NCBI Taxonomy" id="160488"/>
    <lineage>
        <taxon>Bacteria</taxon>
        <taxon>Pseudomonadati</taxon>
        <taxon>Pseudomonadota</taxon>
        <taxon>Gammaproteobacteria</taxon>
        <taxon>Pseudomonadales</taxon>
        <taxon>Pseudomonadaceae</taxon>
        <taxon>Pseudomonas</taxon>
    </lineage>
</organism>
<feature type="chain" id="PRO_0000056547" description="Betaine aldehyde dehydrogenase">
    <location>
        <begin position="1"/>
        <end position="490"/>
    </location>
</feature>
<feature type="active site" description="Charge relay system" evidence="1">
    <location>
        <position position="162"/>
    </location>
</feature>
<feature type="active site" description="Proton acceptor" evidence="1">
    <location>
        <position position="252"/>
    </location>
</feature>
<feature type="active site" description="Nucleophile" evidence="1">
    <location>
        <position position="286"/>
    </location>
</feature>
<feature type="active site" description="Charge relay system" evidence="1">
    <location>
        <position position="464"/>
    </location>
</feature>
<feature type="binding site" evidence="1">
    <location>
        <position position="27"/>
    </location>
    <ligand>
        <name>K(+)</name>
        <dbReference type="ChEBI" id="CHEBI:29103"/>
        <label>1</label>
    </ligand>
</feature>
<feature type="binding site" evidence="1">
    <location>
        <position position="93"/>
    </location>
    <ligand>
        <name>K(+)</name>
        <dbReference type="ChEBI" id="CHEBI:29103"/>
        <label>1</label>
    </ligand>
</feature>
<feature type="binding site" evidence="1">
    <location>
        <begin position="150"/>
        <end position="152"/>
    </location>
    <ligand>
        <name>NAD(+)</name>
        <dbReference type="ChEBI" id="CHEBI:57540"/>
    </ligand>
</feature>
<feature type="binding site" evidence="1">
    <location>
        <begin position="176"/>
        <end position="179"/>
    </location>
    <ligand>
        <name>NAD(+)</name>
        <dbReference type="ChEBI" id="CHEBI:57540"/>
    </ligand>
</feature>
<feature type="binding site" evidence="1">
    <location>
        <position position="180"/>
    </location>
    <ligand>
        <name>K(+)</name>
        <dbReference type="ChEBI" id="CHEBI:29103"/>
        <label>1</label>
    </ligand>
</feature>
<feature type="binding site" evidence="1">
    <location>
        <begin position="230"/>
        <end position="233"/>
    </location>
    <ligand>
        <name>NAD(+)</name>
        <dbReference type="ChEBI" id="CHEBI:57540"/>
    </ligand>
</feature>
<feature type="binding site" evidence="1">
    <location>
        <position position="246"/>
    </location>
    <ligand>
        <name>K(+)</name>
        <dbReference type="ChEBI" id="CHEBI:29103"/>
        <label>2</label>
    </ligand>
</feature>
<feature type="binding site" evidence="1">
    <location>
        <position position="254"/>
    </location>
    <ligand>
        <name>NAD(+)</name>
        <dbReference type="ChEBI" id="CHEBI:57540"/>
    </ligand>
</feature>
<feature type="binding site" description="covalent" evidence="1">
    <location>
        <position position="286"/>
    </location>
    <ligand>
        <name>NAD(+)</name>
        <dbReference type="ChEBI" id="CHEBI:57540"/>
    </ligand>
</feature>
<feature type="binding site" evidence="1">
    <location>
        <position position="387"/>
    </location>
    <ligand>
        <name>NAD(+)</name>
        <dbReference type="ChEBI" id="CHEBI:57540"/>
    </ligand>
</feature>
<feature type="binding site" evidence="1">
    <location>
        <position position="457"/>
    </location>
    <ligand>
        <name>K(+)</name>
        <dbReference type="ChEBI" id="CHEBI:29103"/>
        <label>2</label>
    </ligand>
</feature>
<feature type="binding site" evidence="1">
    <location>
        <position position="460"/>
    </location>
    <ligand>
        <name>K(+)</name>
        <dbReference type="ChEBI" id="CHEBI:29103"/>
        <label>2</label>
    </ligand>
</feature>
<feature type="site" description="Seems to be a necessary countercharge to the potassium cations" evidence="1">
    <location>
        <position position="248"/>
    </location>
</feature>
<feature type="modified residue" description="Cysteine sulfenic acid (-SOH)" evidence="1">
    <location>
        <position position="286"/>
    </location>
</feature>